<comment type="function">
    <text evidence="3">Phosphotransferase; part of the gene cluster that mediates the biosynthesis of the alkaloid (-)-FR901483, a potent immunosuppressant that shows efficacy in animal models and a probable inhibitor of purine nucleotide biosynthesis by targeting phosphoribosylpyrophosphate amidotransferase (PPAT) (PubMed:33372776). FrzJ catalyzes the last step of the pathway by phosphorylating the C4'-OH of dephospho-(-)-FR901483 to produce (-)-FR901483 (PubMed:33372776). The biosynthesis of (-)-FR901483 starts with the condensation of two L-tyrosines to yield (S,S)-dityrosyl-piperazine. This process occurs in 3 steps with the non-canonical nonribosomal peptide synthetase FrzA catalyzing the reduction of L-tyrosine into L-tyrosinal, the spontaneous condensation of 2 L-tyrosinal units, and the subsequent reduction by the NmrA-like family domain-containing oxidoreductase FrzB. The cytochrome P450 monooxygenase FrzC then performs coupling between N10 and C1' to morph the piperazine into a 1,4-diazabicyclo[3.2.1]octane spiro-fused to a 2,5-cyclohexadienone. The dienone portion is further reduced to cyclohexanone by the flavin-dependent reductase FrzD. The methyltranserases (MTs) FrzE and FrzF are then involved in the methylation at the C10' amine and the C4 phenolic oxygen, respectively. The order of the two MTs appear to be interchangeable. Cleavage of the C9-N10' bond by the dioxygenase FrzG then leads to formation of a conjugated iminium. In addition to the oxidation of C9, an additional dehydrogenation between C7 and C8 can occur to give a likely shunt product. The next biosynthetic step is the intramolecular aldol condensation catalyzed by the newly identified aldolase FrzH to yield an aza-tricyclic product with the formation of a C9-C3' bond (PubMed:33372776). The short-chain dehydrogenase/reductase FrzI then produces dephospho-(-)-FR901483 that is phosphorylated at C4'-OH into (-)-FR901483 by the phosphotransferase FrzJ (PubMed:33372776).</text>
</comment>
<comment type="catalytic activity">
    <reaction evidence="3">
        <text>(1S,3S,6S,7S,8S,9S)-6-[(4-methoxyphenyl)methyl]-3-(methylamino)-5-azatricyclo[6.3.1.0(1,5)]dodecane-7,9-diol + ATP = (-)-FR901483 + ADP + 2 H(+)</text>
        <dbReference type="Rhea" id="RHEA:83615"/>
        <dbReference type="ChEBI" id="CHEBI:15378"/>
        <dbReference type="ChEBI" id="CHEBI:30616"/>
        <dbReference type="ChEBI" id="CHEBI:233173"/>
        <dbReference type="ChEBI" id="CHEBI:233182"/>
        <dbReference type="ChEBI" id="CHEBI:456216"/>
    </reaction>
    <physiologicalReaction direction="left-to-right" evidence="3">
        <dbReference type="Rhea" id="RHEA:83616"/>
    </physiologicalReaction>
</comment>
<comment type="pathway">
    <text evidence="3">Secondary metabolite biosynthesis.</text>
</comment>
<comment type="subunit">
    <text evidence="2">Monomer.</text>
</comment>
<comment type="similarity">
    <text evidence="5">Belongs to the methylthioribose kinase family.</text>
</comment>
<evidence type="ECO:0000250" key="1">
    <source>
        <dbReference type="UniProtKB" id="O31663"/>
    </source>
</evidence>
<evidence type="ECO:0000250" key="2">
    <source>
        <dbReference type="UniProtKB" id="P0DPA8"/>
    </source>
</evidence>
<evidence type="ECO:0000269" key="3">
    <source>
    </source>
</evidence>
<evidence type="ECO:0000303" key="4">
    <source>
    </source>
</evidence>
<evidence type="ECO:0000305" key="5"/>
<keyword id="KW-0067">ATP-binding</keyword>
<keyword id="KW-0418">Kinase</keyword>
<keyword id="KW-0460">Magnesium</keyword>
<keyword id="KW-0547">Nucleotide-binding</keyword>
<keyword id="KW-0808">Transferase</keyword>
<name>FRZJ_CLASX</name>
<gene>
    <name evidence="4" type="primary">FrzJ</name>
</gene>
<reference key="1">
    <citation type="journal article" date="2021" name="J. Am. Chem. Soc.">
        <title>Biosynthesis of the Immunosuppressant (-)-FR901483.</title>
        <authorList>
            <person name="Zhang Z."/>
            <person name="Tamura Y."/>
            <person name="Tang M."/>
            <person name="Qiao T."/>
            <person name="Sato M."/>
            <person name="Otsu Y."/>
            <person name="Sasamura S."/>
            <person name="Taniguchi M."/>
            <person name="Watanabe K."/>
            <person name="Tang Y."/>
        </authorList>
    </citation>
    <scope>NUCLEOTIDE SEQUENCE [GENOMIC DNA]</scope>
    <scope>FUNCTION</scope>
    <scope>CATALYTIC ACTIVITY</scope>
    <scope>PATHWAY</scope>
    <source>
        <strain>11231</strain>
    </source>
</reference>
<accession>A0A7T8F1J6</accession>
<dbReference type="EC" id="2.7.1.-" evidence="3"/>
<dbReference type="EMBL" id="MW322046">
    <property type="protein sequence ID" value="QQO98480.1"/>
    <property type="molecule type" value="Genomic_DNA"/>
</dbReference>
<dbReference type="Gene3D" id="3.30.200.20">
    <property type="entry name" value="Phosphorylase Kinase, domain 1"/>
    <property type="match status" value="1"/>
</dbReference>
<dbReference type="InterPro" id="IPR011009">
    <property type="entry name" value="Kinase-like_dom_sf"/>
</dbReference>
<dbReference type="SUPFAM" id="SSF56112">
    <property type="entry name" value="Protein kinase-like (PK-like)"/>
    <property type="match status" value="1"/>
</dbReference>
<organism>
    <name type="scientific">Cladobotryum sp</name>
    <dbReference type="NCBI Taxonomy" id="2040732"/>
    <lineage>
        <taxon>Eukaryota</taxon>
        <taxon>Fungi</taxon>
        <taxon>Dikarya</taxon>
        <taxon>Ascomycota</taxon>
        <taxon>Pezizomycotina</taxon>
        <taxon>Sordariomycetes</taxon>
        <taxon>Hypocreomycetidae</taxon>
        <taxon>Hypocreales</taxon>
        <taxon>Hypocreaceae</taxon>
        <taxon>Cladobotryum</taxon>
    </lineage>
</organism>
<feature type="chain" id="PRO_0000462338" description="Phosphotransferase FrzJ">
    <location>
        <begin position="1"/>
        <end position="385"/>
    </location>
</feature>
<feature type="active site" evidence="2">
    <location>
        <position position="245"/>
    </location>
</feature>
<feature type="binding site" evidence="1">
    <location>
        <position position="38"/>
    </location>
    <ligand>
        <name>ATP</name>
        <dbReference type="ChEBI" id="CHEBI:30616"/>
    </ligand>
</feature>
<feature type="binding site" evidence="1">
    <location>
        <position position="59"/>
    </location>
    <ligand>
        <name>ATP</name>
        <dbReference type="ChEBI" id="CHEBI:30616"/>
    </ligand>
</feature>
<protein>
    <recommendedName>
        <fullName evidence="4">Phosphotransferase FrzJ</fullName>
        <ecNumber evidence="3">2.7.1.-</ecNumber>
    </recommendedName>
    <alternativeName>
        <fullName evidence="4">FR901483 biosynthesis clusters protein J</fullName>
    </alternativeName>
</protein>
<sequence length="385" mass="43202">MGTTERESDPIAALILDRLSCTEYACSSLSRVNGGLMNFIYRGTLSRPLPDGATTVIVKHAEEYLSGIEGLSLSTYRSVIAAITLSFGYCVMDVESVQTNRYCVALDEVEVAVPRVYKFDAESNTQILEDITGYITVCEFLTSRCTQSTSPAFTTRLGFRLGSWLGGLHAWGEGRSPAEIIGGVEENQEAQDGSFDFFYGNPVRRVEQFPHLLGDCKEVLEQIRDRAAREQKSRTGEKFGFVHGDILSRKSVLIPGDSVTRDQHLRFVIIDWELSQYECHFRECGEVLGDLYLLKRFQDIDGAMSIIQGFLEGYPPLNEDAIFRTAIYLGLFLLANEVTLSTDYPKQQIEDFVILARDLVLAGWHKDRETLAKTVFGPVFFRAMN</sequence>
<proteinExistence type="evidence at protein level"/>